<sequence>MTQELKSKLLSFFKFIFATALFIFVIFTLYRELSHINFKETFIQFGKINRLWLVLLFAGGGLSLILLSLYDIILVKALKLKMPLIRVFRVSYIINALNSIIGFGGFIGAGVRAFVYKNYTNDTKKLVQYISIILVSMLTGLSLLSILVVLRIFNASHMIDEISWVRWILYIVALFLPIFIFYTVARPVDRNNRYMGVYCTVVSCVEWMAAATVLYFAALIVDIHISFMTFVGIFVIAALSGLVSFIPGGFGAFDLVVLLGLKSLGISEEKILLALVLYRFAYYFVPVMIALILSSFEFGNTAKKYLDNSKYFIPVKDFTSFLRSYQKDILAKVPSFSLAILIFLTSIIFFINNLTIVYDGLYDGNHFAYYIALAVQTSACLLLILNVRGIYKGSRRAIIYAFISIILIASATIYTYASFLLLSWLIIIFVLLILAYQRAQVLKRPLRFKKLAVMLLLSIFILYLNHILISGTLYALDVYHIEIDTSLLRYYFWMTIVIIMLLVGVIAWLFDYKYKCPHHSIDLTLCDAIIQKYGGNYLSHLVYSGDKDCFFNENKDSFIMYRYKSNALVVLGDPIGNTKSFESLLEAFYQFAEYQGYEIIFYQISDQYMPLYHNFGNQFFKLGEEAIIDLTTFTTSGKKRRGFRATLNKFDDLNINFEIIEPPFTQDFFDELKFVSDKWLDGRSEMHFSVGQFTQTYLSKAPIGVMRDHSGKMIAFCSLMPTYSNNAISVDLIRWLPELDLPLMDGLYLHMLLWSKEKGYKAFNMGMATLSNVGQLHYSYLRERMAGRVFEHFNGLYRFQGLRRYKEKYSPNWEPRFLVYQKHYSLWESMLKVMRVIRHK</sequence>
<keyword id="KW-0046">Antibiotic resistance</keyword>
<keyword id="KW-1003">Cell membrane</keyword>
<keyword id="KW-0443">Lipid metabolism</keyword>
<keyword id="KW-0472">Membrane</keyword>
<keyword id="KW-0808">Transferase</keyword>
<keyword id="KW-0812">Transmembrane</keyword>
<keyword id="KW-1133">Transmembrane helix</keyword>
<keyword id="KW-0843">Virulence</keyword>
<proteinExistence type="inferred from homology"/>
<feature type="chain" id="PRO_0000096567" description="Phosphatidylglycerol lysyltransferase">
    <location>
        <begin position="1"/>
        <end position="840"/>
    </location>
</feature>
<feature type="topological domain" description="Cytoplasmic" evidence="2">
    <location>
        <begin position="1"/>
        <end position="8"/>
    </location>
</feature>
<feature type="transmembrane region" description="Helical" evidence="2">
    <location>
        <begin position="9"/>
        <end position="29"/>
    </location>
</feature>
<feature type="topological domain" description="Extracellular" evidence="2">
    <location>
        <begin position="30"/>
        <end position="52"/>
    </location>
</feature>
<feature type="transmembrane region" description="Helical" evidence="2">
    <location>
        <begin position="53"/>
        <end position="73"/>
    </location>
</feature>
<feature type="topological domain" description="Cytoplasmic" evidence="2">
    <location>
        <begin position="74"/>
        <end position="89"/>
    </location>
</feature>
<feature type="transmembrane region" description="Helical" evidence="2">
    <location>
        <begin position="90"/>
        <end position="110"/>
    </location>
</feature>
<feature type="topological domain" description="Extracellular" evidence="2">
    <location>
        <begin position="111"/>
        <end position="129"/>
    </location>
</feature>
<feature type="transmembrane region" description="Helical" evidence="2">
    <location>
        <begin position="130"/>
        <end position="150"/>
    </location>
</feature>
<feature type="topological domain" description="Cytoplasmic" evidence="2">
    <location>
        <begin position="151"/>
        <end position="161"/>
    </location>
</feature>
<feature type="transmembrane region" description="Helical" evidence="2">
    <location>
        <begin position="162"/>
        <end position="182"/>
    </location>
</feature>
<feature type="topological domain" description="Extracellular" evidence="2">
    <location>
        <begin position="183"/>
        <end position="200"/>
    </location>
</feature>
<feature type="transmembrane region" description="Helical" evidence="2">
    <location>
        <begin position="201"/>
        <end position="221"/>
    </location>
</feature>
<feature type="topological domain" description="Cytoplasmic" evidence="2">
    <location>
        <begin position="222"/>
        <end position="229"/>
    </location>
</feature>
<feature type="transmembrane region" description="Helical" evidence="2">
    <location>
        <begin position="230"/>
        <end position="250"/>
    </location>
</feature>
<feature type="topological domain" description="Extracellular" evidence="2">
    <location>
        <begin position="251"/>
        <end position="270"/>
    </location>
</feature>
<feature type="transmembrane region" description="Helical" evidence="2">
    <location>
        <begin position="271"/>
        <end position="291"/>
    </location>
</feature>
<feature type="topological domain" description="Cytoplasmic" evidence="2">
    <location>
        <begin position="292"/>
        <end position="337"/>
    </location>
</feature>
<feature type="transmembrane region" description="Helical" evidence="2">
    <location>
        <begin position="338"/>
        <end position="358"/>
    </location>
</feature>
<feature type="topological domain" description="Extracellular" evidence="2">
    <location>
        <begin position="359"/>
        <end position="366"/>
    </location>
</feature>
<feature type="transmembrane region" description="Helical" evidence="2">
    <location>
        <begin position="367"/>
        <end position="387"/>
    </location>
</feature>
<feature type="topological domain" description="Cytoplasmic" evidence="2">
    <location>
        <begin position="388"/>
        <end position="392"/>
    </location>
</feature>
<feature type="transmembrane region" description="Helical" evidence="2">
    <location>
        <begin position="393"/>
        <end position="413"/>
    </location>
</feature>
<feature type="topological domain" description="Extracellular" evidence="2">
    <location>
        <begin position="414"/>
        <end position="415"/>
    </location>
</feature>
<feature type="transmembrane region" description="Helical" evidence="2">
    <location>
        <begin position="416"/>
        <end position="436"/>
    </location>
</feature>
<feature type="topological domain" description="Cytoplasmic" evidence="2">
    <location>
        <begin position="437"/>
        <end position="450"/>
    </location>
</feature>
<feature type="transmembrane region" description="Helical" evidence="2">
    <location>
        <begin position="451"/>
        <end position="471"/>
    </location>
</feature>
<feature type="topological domain" description="Extracellular" evidence="2">
    <location>
        <begin position="472"/>
        <end position="489"/>
    </location>
</feature>
<feature type="transmembrane region" description="Helical" evidence="2">
    <location>
        <begin position="490"/>
        <end position="510"/>
    </location>
</feature>
<feature type="topological domain" description="Cytoplasmic" evidence="2">
    <location>
        <begin position="511"/>
        <end position="840"/>
    </location>
</feature>
<protein>
    <recommendedName>
        <fullName>Phosphatidylglycerol lysyltransferase</fullName>
        <ecNumber>2.3.2.3</ecNumber>
    </recommendedName>
    <alternativeName>
        <fullName>Lysylphosphatidylglycerol synthase</fullName>
        <shortName>LPG synthase</shortName>
    </alternativeName>
    <alternativeName>
        <fullName>Multiple peptide resistance factor</fullName>
    </alternativeName>
</protein>
<evidence type="ECO:0000250" key="1"/>
<evidence type="ECO:0000255" key="2"/>
<evidence type="ECO:0000305" key="3"/>
<dbReference type="EC" id="2.3.2.3"/>
<dbReference type="EMBL" id="AE015929">
    <property type="protein sequence ID" value="AAO04638.1"/>
    <property type="molecule type" value="Genomic_DNA"/>
</dbReference>
<dbReference type="RefSeq" id="NP_764596.1">
    <property type="nucleotide sequence ID" value="NC_004461.1"/>
</dbReference>
<dbReference type="RefSeq" id="WP_001831275.1">
    <property type="nucleotide sequence ID" value="NZ_WBME01000040.1"/>
</dbReference>
<dbReference type="SMR" id="Q8CPC0"/>
<dbReference type="GeneID" id="50018832"/>
<dbReference type="KEGG" id="sep:SE_1041"/>
<dbReference type="PATRIC" id="fig|176280.10.peg.1016"/>
<dbReference type="eggNOG" id="COG0392">
    <property type="taxonomic scope" value="Bacteria"/>
</dbReference>
<dbReference type="eggNOG" id="COG2898">
    <property type="taxonomic scope" value="Bacteria"/>
</dbReference>
<dbReference type="HOGENOM" id="CLU_008255_7_1_9"/>
<dbReference type="OrthoDB" id="145485at2"/>
<dbReference type="Proteomes" id="UP000001411">
    <property type="component" value="Chromosome"/>
</dbReference>
<dbReference type="GO" id="GO:0005886">
    <property type="term" value="C:plasma membrane"/>
    <property type="evidence" value="ECO:0007669"/>
    <property type="project" value="UniProtKB-SubCell"/>
</dbReference>
<dbReference type="GO" id="GO:0050071">
    <property type="term" value="F:phosphatidylglycerol lysyltransferase activity"/>
    <property type="evidence" value="ECO:0007669"/>
    <property type="project" value="UniProtKB-EC"/>
</dbReference>
<dbReference type="GO" id="GO:0006629">
    <property type="term" value="P:lipid metabolic process"/>
    <property type="evidence" value="ECO:0007669"/>
    <property type="project" value="UniProtKB-KW"/>
</dbReference>
<dbReference type="GO" id="GO:0055091">
    <property type="term" value="P:phospholipid homeostasis"/>
    <property type="evidence" value="ECO:0007669"/>
    <property type="project" value="TreeGrafter"/>
</dbReference>
<dbReference type="GO" id="GO:0046677">
    <property type="term" value="P:response to antibiotic"/>
    <property type="evidence" value="ECO:0007669"/>
    <property type="project" value="UniProtKB-KW"/>
</dbReference>
<dbReference type="InterPro" id="IPR016181">
    <property type="entry name" value="Acyl_CoA_acyltransferase"/>
</dbReference>
<dbReference type="InterPro" id="IPR022791">
    <property type="entry name" value="L-PG_synthase/AglD"/>
</dbReference>
<dbReference type="InterPro" id="IPR024320">
    <property type="entry name" value="LPG_synthase_C"/>
</dbReference>
<dbReference type="InterPro" id="IPR051211">
    <property type="entry name" value="PG_lysyltransferase"/>
</dbReference>
<dbReference type="NCBIfam" id="NF033480">
    <property type="entry name" value="bifunc_MprF"/>
    <property type="match status" value="1"/>
</dbReference>
<dbReference type="PANTHER" id="PTHR34697">
    <property type="entry name" value="PHOSPHATIDYLGLYCEROL LYSYLTRANSFERASE"/>
    <property type="match status" value="1"/>
</dbReference>
<dbReference type="PANTHER" id="PTHR34697:SF2">
    <property type="entry name" value="PHOSPHATIDYLGLYCEROL LYSYLTRANSFERASE"/>
    <property type="match status" value="1"/>
</dbReference>
<dbReference type="Pfam" id="PF09924">
    <property type="entry name" value="LPG_synthase_C"/>
    <property type="match status" value="1"/>
</dbReference>
<dbReference type="Pfam" id="PF03706">
    <property type="entry name" value="LPG_synthase_TM"/>
    <property type="match status" value="1"/>
</dbReference>
<dbReference type="SUPFAM" id="SSF55729">
    <property type="entry name" value="Acyl-CoA N-acyltransferases (Nat)"/>
    <property type="match status" value="1"/>
</dbReference>
<gene>
    <name type="primary">mprF</name>
    <name type="ordered locus">SE_1041</name>
</gene>
<name>MPRF_STAES</name>
<reference key="1">
    <citation type="journal article" date="2003" name="Mol. Microbiol.">
        <title>Genome-based analysis of virulence genes in a non-biofilm-forming Staphylococcus epidermidis strain (ATCC 12228).</title>
        <authorList>
            <person name="Zhang Y.-Q."/>
            <person name="Ren S.-X."/>
            <person name="Li H.-L."/>
            <person name="Wang Y.-X."/>
            <person name="Fu G."/>
            <person name="Yang J."/>
            <person name="Qin Z.-Q."/>
            <person name="Miao Y.-G."/>
            <person name="Wang W.-Y."/>
            <person name="Chen R.-S."/>
            <person name="Shen Y."/>
            <person name="Chen Z."/>
            <person name="Yuan Z.-H."/>
            <person name="Zhao G.-P."/>
            <person name="Qu D."/>
            <person name="Danchin A."/>
            <person name="Wen Y.-M."/>
        </authorList>
    </citation>
    <scope>NUCLEOTIDE SEQUENCE [LARGE SCALE GENOMIC DNA]</scope>
    <source>
        <strain>ATCC 12228 / FDA PCI 1200</strain>
    </source>
</reference>
<comment type="function">
    <text evidence="1">Catalyzes the transfer of a lysyl group from L-lysyl-tRNA(Lys) to membrane-bound phosphatidylglycerol (PG), which produces lysylphosphatidylglycerol (LPG), a major component of the bacterial membrane with a positive net charge. LPG synthesis contributes to bacterial virulence as it is involved in the resistance mechanism against cationic antimicrobial peptides (CAMP) produces by the host's immune system (defensins, cathelicidins) and by the competing microorganisms (bacteriocins). In fact, the modification of anionic phosphatidylglycerol with positively charged L-lysine results in repulsion of the peptides (By similarity).</text>
</comment>
<comment type="catalytic activity">
    <reaction>
        <text>L-lysyl-tRNA(Lys) + a 1,2-diacyl-sn-glycero-3-phospho-(1'-sn-glycerol) = a 1,2-diacyl-sn-glycero-3-phospho-1'-(3'-O-L-lysyl)-sn-glycerol + tRNA(Lys)</text>
        <dbReference type="Rhea" id="RHEA:10668"/>
        <dbReference type="Rhea" id="RHEA-COMP:9696"/>
        <dbReference type="Rhea" id="RHEA-COMP:9697"/>
        <dbReference type="ChEBI" id="CHEBI:64716"/>
        <dbReference type="ChEBI" id="CHEBI:75792"/>
        <dbReference type="ChEBI" id="CHEBI:78442"/>
        <dbReference type="ChEBI" id="CHEBI:78529"/>
        <dbReference type="EC" id="2.3.2.3"/>
    </reaction>
</comment>
<comment type="subcellular location">
    <subcellularLocation>
        <location>Cell membrane</location>
        <topology>Multi-pass membrane protein</topology>
    </subcellularLocation>
</comment>
<comment type="similarity">
    <text evidence="3">Belongs to the LPG synthase family.</text>
</comment>
<organism>
    <name type="scientific">Staphylococcus epidermidis (strain ATCC 12228 / FDA PCI 1200)</name>
    <dbReference type="NCBI Taxonomy" id="176280"/>
    <lineage>
        <taxon>Bacteria</taxon>
        <taxon>Bacillati</taxon>
        <taxon>Bacillota</taxon>
        <taxon>Bacilli</taxon>
        <taxon>Bacillales</taxon>
        <taxon>Staphylococcaceae</taxon>
        <taxon>Staphylococcus</taxon>
    </lineage>
</organism>
<accession>Q8CPC0</accession>